<organism>
    <name type="scientific">Paraphysa scrofa</name>
    <name type="common">Chilean copper tarantula</name>
    <name type="synonym">Phrixotrichus auratus</name>
    <dbReference type="NCBI Taxonomy" id="269635"/>
    <lineage>
        <taxon>Eukaryota</taxon>
        <taxon>Metazoa</taxon>
        <taxon>Ecdysozoa</taxon>
        <taxon>Arthropoda</taxon>
        <taxon>Chelicerata</taxon>
        <taxon>Arachnida</taxon>
        <taxon>Araneae</taxon>
        <taxon>Mygalomorphae</taxon>
        <taxon>Theraphosidae</taxon>
        <taxon>Paraphysa</taxon>
    </lineage>
</organism>
<proteinExistence type="evidence at protein level"/>
<evidence type="ECO:0000250" key="1">
    <source>
        <dbReference type="UniProtKB" id="P60273"/>
    </source>
</evidence>
<evidence type="ECO:0000250" key="2">
    <source>
        <dbReference type="UniProtKB" id="P61230"/>
    </source>
</evidence>
<evidence type="ECO:0000269" key="3">
    <source>
    </source>
</evidence>
<evidence type="ECO:0000303" key="4">
    <source>
    </source>
</evidence>
<evidence type="ECO:0000305" key="5"/>
<evidence type="ECO:0000305" key="6">
    <source>
    </source>
</evidence>
<keyword id="KW-0027">Amidation</keyword>
<keyword id="KW-0903">Direct protein sequencing</keyword>
<keyword id="KW-1015">Disulfide bond</keyword>
<keyword id="KW-0872">Ion channel impairing toxin</keyword>
<keyword id="KW-0960">Knottin</keyword>
<keyword id="KW-0528">Neurotoxin</keyword>
<keyword id="KW-0632">Potassium channel impairing toxin</keyword>
<keyword id="KW-0964">Secreted</keyword>
<keyword id="KW-0800">Toxin</keyword>
<keyword id="KW-1220">Voltage-gated potassium channel impairing toxin</keyword>
<accession>P61231</accession>
<reference key="1">
    <citation type="journal article" date="1999" name="Br. J. Pharmacol.">
        <title>Effects of phrixotoxins on the Kv4 family of potassium channels and implications for the role of Ito1 in cardiac electrogenesis.</title>
        <authorList>
            <person name="Diochot S."/>
            <person name="Drici M.-D."/>
            <person name="Moinier D."/>
            <person name="Fink M."/>
            <person name="Lazdunski M."/>
        </authorList>
    </citation>
    <scope>PROTEIN SEQUENCE</scope>
    <scope>FUNCTION</scope>
    <scope>AMIDATION AT MET-31</scope>
    <scope>MASS SPECTROMETRY</scope>
    <scope>SUBCELLULAR LOCATION</scope>
</reference>
<feature type="peptide" id="PRO_0000045023" description="Kappa-theraphotoxin-Ps1b" evidence="3">
    <location>
        <begin position="1"/>
        <end position="31"/>
    </location>
</feature>
<feature type="modified residue" description="Methionine amide" evidence="6">
    <location>
        <position position="31"/>
    </location>
</feature>
<feature type="disulfide bond" evidence="1">
    <location>
        <begin position="2"/>
        <end position="16"/>
    </location>
</feature>
<feature type="disulfide bond" evidence="1">
    <location>
        <begin position="9"/>
        <end position="21"/>
    </location>
</feature>
<feature type="disulfide bond" evidence="1">
    <location>
        <begin position="15"/>
        <end position="25"/>
    </location>
</feature>
<sequence length="31" mass="3929">YCQKWMWTCDEERKCCEGLVCRLWCKRIINM</sequence>
<protein>
    <recommendedName>
        <fullName evidence="5">Kappa-theraphotoxin-Ps1b</fullName>
        <shortName evidence="5">Kappa-TRTX-Ps1b</shortName>
    </recommendedName>
    <alternativeName>
        <fullName evidence="4">PaTX2</fullName>
    </alternativeName>
    <alternativeName>
        <fullName evidence="4">Phrixotoxin-2</fullName>
    </alternativeName>
</protein>
<comment type="function">
    <text evidence="3">Potent and specific blocker of Kv4.2/KCND2 (IC(50)=34 nM) and Kv4.3/KCND3 (IC(50)=71 nM) potassium channels (PubMed:10051143). Acts by altering the gating properties of these channels (PubMed:10051143).</text>
</comment>
<comment type="subcellular location">
    <subcellularLocation>
        <location evidence="3">Secreted</location>
    </subcellularLocation>
</comment>
<comment type="tissue specificity">
    <text evidence="6">Expressed by the venom gland.</text>
</comment>
<comment type="domain">
    <text evidence="2">The presence of a 'disulfide through disulfide knot' structurally defines this protein as a knottin.</text>
</comment>
<comment type="mass spectrometry" mass="3921.77" method="Electrospray" evidence="3"/>
<comment type="miscellaneous">
    <text evidence="5">The primary structure of this mature peptide is identical to that of kappa-theraphotoxin-Gr2a (GsMTx-2) from Grammostola rosea (AC P60273).</text>
</comment>
<comment type="miscellaneous">
    <text evidence="3">Is the most abundant peptide in the venom.</text>
</comment>
<comment type="miscellaneous">
    <text evidence="3">Negative results: does not inhibit Kv1/KCNA, Kv2/KCNB, Kv3/KCNC, and Kv11/KCNH channels (PubMed:10051143). It weakly blocks the neuronal TTX-sensitive sodium currents of neuroblastoma cells (14% inhibition at 500 nM) (PubMed:10051143).</text>
</comment>
<comment type="similarity">
    <text evidence="5">Belongs to the neurotoxin 30 (phrixotoxin) family.</text>
</comment>
<name>TXP2_PARSR</name>
<dbReference type="SMR" id="P61231"/>
<dbReference type="ArachnoServer" id="AS000402">
    <property type="toxin name" value="kappa-theraphotoxin-Ps1b"/>
</dbReference>
<dbReference type="GO" id="GO:0005576">
    <property type="term" value="C:extracellular region"/>
    <property type="evidence" value="ECO:0007669"/>
    <property type="project" value="UniProtKB-SubCell"/>
</dbReference>
<dbReference type="GO" id="GO:0008200">
    <property type="term" value="F:ion channel inhibitor activity"/>
    <property type="evidence" value="ECO:0007669"/>
    <property type="project" value="InterPro"/>
</dbReference>
<dbReference type="GO" id="GO:0015459">
    <property type="term" value="F:potassium channel regulator activity"/>
    <property type="evidence" value="ECO:0007669"/>
    <property type="project" value="UniProtKB-KW"/>
</dbReference>
<dbReference type="GO" id="GO:0090729">
    <property type="term" value="F:toxin activity"/>
    <property type="evidence" value="ECO:0007669"/>
    <property type="project" value="UniProtKB-KW"/>
</dbReference>
<dbReference type="InterPro" id="IPR011696">
    <property type="entry name" value="Huwentoxin-1"/>
</dbReference>
<dbReference type="Pfam" id="PF07740">
    <property type="entry name" value="Toxin_12"/>
    <property type="match status" value="1"/>
</dbReference>
<dbReference type="SUPFAM" id="SSF57059">
    <property type="entry name" value="omega toxin-like"/>
    <property type="match status" value="1"/>
</dbReference>